<feature type="chain" id="PRO_0000125692" description="Large ribosomal subunit protein uL1">
    <location>
        <begin position="1"/>
        <end position="336"/>
    </location>
</feature>
<feature type="region of interest" description="Large ribosomal subunit protein uL1" evidence="1">
    <location>
        <begin position="1"/>
        <end position="245"/>
    </location>
</feature>
<feature type="region of interest" description="Unknown">
    <location>
        <begin position="246"/>
        <end position="336"/>
    </location>
</feature>
<feature type="region of interest" description="Disordered" evidence="2">
    <location>
        <begin position="267"/>
        <end position="336"/>
    </location>
</feature>
<feature type="compositionally biased region" description="Basic residues" evidence="2">
    <location>
        <begin position="286"/>
        <end position="305"/>
    </location>
</feature>
<feature type="compositionally biased region" description="Low complexity" evidence="2">
    <location>
        <begin position="306"/>
        <end position="315"/>
    </location>
</feature>
<organism>
    <name type="scientific">Malacoplasma penetrans (strain HF-2)</name>
    <name type="common">Mycoplasma penetrans</name>
    <dbReference type="NCBI Taxonomy" id="272633"/>
    <lineage>
        <taxon>Bacteria</taxon>
        <taxon>Bacillati</taxon>
        <taxon>Mycoplasmatota</taxon>
        <taxon>Mycoplasmoidales</taxon>
        <taxon>Mycoplasmoidaceae</taxon>
        <taxon>Malacoplasma</taxon>
    </lineage>
</organism>
<sequence>MANQKKVTNKTPKKPSVNFDRTKFYTIEEAVNLAKQTSNAKFLSSIDIAIKLNLDTSKSDQQLRGTVSLPYFFGKEKRILVLDKGLTQKDAKSLGVNHAGDSELIAEISKGWLDFDLIITTPKMMPELSKLGKILGTRGLMPNPKNGNVTTDLPKTIAEFKKGINQYRTDSYGNIHMVVGKANADTAKIVENINFLLSFIAAKRLTSVKGIFIEKVNLSSTMGPGIRVLVNKTAVVKKTAKGKVIADDSAKGENKKPAYLIQRVKYAQKKKPSKHPENPPVITEAKKKKVKKILKKAKPAKKAAVAKKPVVVNKKTATKKSPAKKGDVKKAKTSKK</sequence>
<evidence type="ECO:0000255" key="1">
    <source>
        <dbReference type="HAMAP-Rule" id="MF_01318"/>
    </source>
</evidence>
<evidence type="ECO:0000256" key="2">
    <source>
        <dbReference type="SAM" id="MobiDB-lite"/>
    </source>
</evidence>
<reference key="1">
    <citation type="journal article" date="2002" name="Nucleic Acids Res.">
        <title>The complete genomic sequence of Mycoplasma penetrans, an intracellular bacterial pathogen in humans.</title>
        <authorList>
            <person name="Sasaki Y."/>
            <person name="Ishikawa J."/>
            <person name="Yamashita A."/>
            <person name="Oshima K."/>
            <person name="Kenri T."/>
            <person name="Furuya K."/>
            <person name="Yoshino C."/>
            <person name="Horino A."/>
            <person name="Shiba T."/>
            <person name="Sasaki T."/>
            <person name="Hattori M."/>
        </authorList>
    </citation>
    <scope>NUCLEOTIDE SEQUENCE [LARGE SCALE GENOMIC DNA]</scope>
    <source>
        <strain>HF-2</strain>
    </source>
</reference>
<dbReference type="EMBL" id="BA000026">
    <property type="protein sequence ID" value="BAC43816.1"/>
    <property type="molecule type" value="Genomic_DNA"/>
</dbReference>
<dbReference type="RefSeq" id="WP_011076852.1">
    <property type="nucleotide sequence ID" value="NC_004432.1"/>
</dbReference>
<dbReference type="SMR" id="Q8EX24"/>
<dbReference type="FunCoup" id="Q8EX24">
    <property type="interactions" value="283"/>
</dbReference>
<dbReference type="STRING" id="272633.gene:10731117"/>
<dbReference type="KEGG" id="mpe:MYPE260"/>
<dbReference type="eggNOG" id="COG0081">
    <property type="taxonomic scope" value="Bacteria"/>
</dbReference>
<dbReference type="HOGENOM" id="CLU_825898_0_0_14"/>
<dbReference type="InParanoid" id="Q8EX24"/>
<dbReference type="Proteomes" id="UP000002522">
    <property type="component" value="Chromosome"/>
</dbReference>
<dbReference type="GO" id="GO:0015934">
    <property type="term" value="C:large ribosomal subunit"/>
    <property type="evidence" value="ECO:0007669"/>
    <property type="project" value="InterPro"/>
</dbReference>
<dbReference type="GO" id="GO:0019843">
    <property type="term" value="F:rRNA binding"/>
    <property type="evidence" value="ECO:0007669"/>
    <property type="project" value="UniProtKB-UniRule"/>
</dbReference>
<dbReference type="GO" id="GO:0003735">
    <property type="term" value="F:structural constituent of ribosome"/>
    <property type="evidence" value="ECO:0007669"/>
    <property type="project" value="InterPro"/>
</dbReference>
<dbReference type="GO" id="GO:0000049">
    <property type="term" value="F:tRNA binding"/>
    <property type="evidence" value="ECO:0007669"/>
    <property type="project" value="UniProtKB-KW"/>
</dbReference>
<dbReference type="GO" id="GO:0006417">
    <property type="term" value="P:regulation of translation"/>
    <property type="evidence" value="ECO:0007669"/>
    <property type="project" value="UniProtKB-KW"/>
</dbReference>
<dbReference type="GO" id="GO:0006412">
    <property type="term" value="P:translation"/>
    <property type="evidence" value="ECO:0007669"/>
    <property type="project" value="UniProtKB-UniRule"/>
</dbReference>
<dbReference type="CDD" id="cd00403">
    <property type="entry name" value="Ribosomal_L1"/>
    <property type="match status" value="1"/>
</dbReference>
<dbReference type="FunFam" id="3.40.50.790:FF:000001">
    <property type="entry name" value="50S ribosomal protein L1"/>
    <property type="match status" value="1"/>
</dbReference>
<dbReference type="Gene3D" id="3.30.190.20">
    <property type="match status" value="1"/>
</dbReference>
<dbReference type="Gene3D" id="3.40.50.790">
    <property type="match status" value="1"/>
</dbReference>
<dbReference type="HAMAP" id="MF_01318_B">
    <property type="entry name" value="Ribosomal_uL1_B"/>
    <property type="match status" value="1"/>
</dbReference>
<dbReference type="InterPro" id="IPR005878">
    <property type="entry name" value="Ribosom_uL1_bac-type"/>
</dbReference>
<dbReference type="InterPro" id="IPR023674">
    <property type="entry name" value="Ribosomal_uL1-like"/>
</dbReference>
<dbReference type="InterPro" id="IPR028364">
    <property type="entry name" value="Ribosomal_uL1/biogenesis"/>
</dbReference>
<dbReference type="InterPro" id="IPR016095">
    <property type="entry name" value="Ribosomal_uL1_3-a/b-sand"/>
</dbReference>
<dbReference type="InterPro" id="IPR023673">
    <property type="entry name" value="Ribosomal_uL1_CS"/>
</dbReference>
<dbReference type="NCBIfam" id="TIGR01169">
    <property type="entry name" value="rplA_bact"/>
    <property type="match status" value="1"/>
</dbReference>
<dbReference type="PANTHER" id="PTHR36427">
    <property type="entry name" value="54S RIBOSOMAL PROTEIN L1, MITOCHONDRIAL"/>
    <property type="match status" value="1"/>
</dbReference>
<dbReference type="PANTHER" id="PTHR36427:SF3">
    <property type="entry name" value="LARGE RIBOSOMAL SUBUNIT PROTEIN UL1M"/>
    <property type="match status" value="1"/>
</dbReference>
<dbReference type="Pfam" id="PF00687">
    <property type="entry name" value="Ribosomal_L1"/>
    <property type="match status" value="1"/>
</dbReference>
<dbReference type="SUPFAM" id="SSF56808">
    <property type="entry name" value="Ribosomal protein L1"/>
    <property type="match status" value="1"/>
</dbReference>
<dbReference type="PROSITE" id="PS01199">
    <property type="entry name" value="RIBOSOMAL_L1"/>
    <property type="match status" value="1"/>
</dbReference>
<protein>
    <recommendedName>
        <fullName evidence="1">Large ribosomal subunit protein uL1</fullName>
    </recommendedName>
    <alternativeName>
        <fullName>50S ribosomal protein L1</fullName>
    </alternativeName>
</protein>
<proteinExistence type="inferred from homology"/>
<gene>
    <name evidence="1" type="primary">rplA</name>
    <name type="ordered locus">MYPE260</name>
</gene>
<accession>Q8EX24</accession>
<comment type="function">
    <text evidence="1">Binds directly to 23S rRNA. The L1 stalk is quite mobile in the ribosome, and is involved in E site tRNA release.</text>
</comment>
<comment type="function">
    <text evidence="1">Protein L1 is also a translational repressor protein, it controls the translation of the L11 operon by binding to its mRNA.</text>
</comment>
<comment type="subunit">
    <text evidence="1">Part of the 50S ribosomal subunit.</text>
</comment>
<comment type="similarity">
    <text evidence="1">Belongs to the universal ribosomal protein uL1 family.</text>
</comment>
<keyword id="KW-1185">Reference proteome</keyword>
<keyword id="KW-0678">Repressor</keyword>
<keyword id="KW-0687">Ribonucleoprotein</keyword>
<keyword id="KW-0689">Ribosomal protein</keyword>
<keyword id="KW-0694">RNA-binding</keyword>
<keyword id="KW-0699">rRNA-binding</keyword>
<keyword id="KW-0810">Translation regulation</keyword>
<keyword id="KW-0820">tRNA-binding</keyword>
<name>RL1_MALP2</name>